<proteinExistence type="evidence at transcript level"/>
<protein>
    <recommendedName>
        <fullName>Securin</fullName>
    </recommendedName>
    <alternativeName>
        <fullName>Pituitary tumor-transforming gene 1 protein</fullName>
    </alternativeName>
</protein>
<accession>Q3SZY3</accession>
<sequence>MSTLIYVDKENGEPGIHVAPKDGLKLGSVPSVKALDGRSQVSTPHVGKMFDAPPALPKTARKALGTVNRATEKSVKTNGPLKQKQTTFSTKKITEKTVKAKSSVPASDDTYPEIEKFFPFNPLDFENFDLPEEHQIARLPLSGVPLMILDEERELEQLLHVGPPSPLKMPPLLWESNLLQSPSSILSTLDVELPPVCCDLDI</sequence>
<gene>
    <name type="primary">PTTG1</name>
</gene>
<name>PTTG1_BOVIN</name>
<reference key="1">
    <citation type="submission" date="2005-12" db="EMBL/GenBank/DDBJ databases">
        <authorList>
            <consortium name="NIH - Mammalian Gene Collection (MGC) project"/>
        </authorList>
    </citation>
    <scope>NUCLEOTIDE SEQUENCE [LARGE SCALE MRNA]</scope>
    <source>
        <strain>Crossbred X Angus</strain>
        <tissue>Liver</tissue>
    </source>
</reference>
<comment type="function">
    <text evidence="1">Regulatory protein, which plays a central role in chromosome stability, in the p53/TP53 pathway, and DNA repair. Probably acts by blocking the action of key proteins. During the mitosis, it blocks Separase/ESPL1 function, preventing the proteolysis of the cohesin complex and the subsequent segregation of the chromosomes. At the onset of anaphase, it is ubiquitinated, conducting to its destruction and to the liberation of ESPL1. Its function is however not limited to a blocking activity, since it is required to activate ESPL1. Negatively regulates the transcriptional activity and related apoptosis activity of TP53. The negative regulation of TP53 may explain the strong transforming capability of the protein when it is overexpressed. May also play a role in DNA repair via its interaction with Ku, possibly by connecting DNA damage-response pathways with sister chromatid separation (By similarity).</text>
</comment>
<comment type="subunit">
    <text evidence="1">Interacts with RPS10 and DNAJA1 (By similarity). Interacts with the caspase-like ESPL1, and prevents its protease activity probably by covering its active site. Interacts with TP53 and blocks its activity probably by blocking its binding to DNA. Interacts with the Ku 70 kDa subunit of ds-DNA kinase. Interacts with PTTG1IP (By similarity).</text>
</comment>
<comment type="subcellular location">
    <subcellularLocation>
        <location evidence="1">Cytoplasm</location>
    </subcellularLocation>
    <subcellularLocation>
        <location evidence="1">Nucleus</location>
    </subcellularLocation>
</comment>
<comment type="domain">
    <text evidence="1">The N-terminal destruction box (D-box) acts as a recognition signal for degradation via the ubiquitin-proteasome pathway.</text>
</comment>
<comment type="domain">
    <text evidence="1">The TEK-boxes are required for 'Lys-11'-linked ubiquitination and facilitate the transfer of the first ubiquitin and ubiquitin chain nucleation. TEK-boxes may direct a catalytically competent orientation of the UBE2C/UBCH10-ubiquitin thioester with the acceptor lysine residue (By similarity).</text>
</comment>
<comment type="PTM">
    <text evidence="1">Phosphorylated at Ser-165 by CDK1 during mitosis.</text>
</comment>
<comment type="PTM">
    <text evidence="1">Phosphorylated in vitro by ds-DNA kinase.</text>
</comment>
<comment type="PTM">
    <text evidence="1">Ubiquitinated through 'Lys-11' linkage of ubiquitin moieties by the anaphase promoting complex (APC) at the onset of anaphase, conducting to its degradation. 'Lys-11'-linked ubiquitination is mediated by the E2 ligase UBE2C/UBCH10 (By similarity).</text>
</comment>
<comment type="similarity">
    <text evidence="4">Belongs to the securin family.</text>
</comment>
<feature type="chain" id="PRO_0000240609" description="Securin">
    <location>
        <begin position="1"/>
        <end position="202"/>
    </location>
</feature>
<feature type="region of interest" description="Disordered" evidence="3">
    <location>
        <begin position="36"/>
        <end position="55"/>
    </location>
</feature>
<feature type="short sequence motif" description="D-box">
    <location>
        <begin position="61"/>
        <end position="64"/>
    </location>
</feature>
<feature type="short sequence motif" description="TEK-box 1">
    <location>
        <begin position="71"/>
        <end position="73"/>
    </location>
</feature>
<feature type="short sequence motif" description="TEK-box 2">
    <location>
        <begin position="94"/>
        <end position="96"/>
    </location>
</feature>
<feature type="short sequence motif" description="SH3-binding">
    <location>
        <begin position="163"/>
        <end position="173"/>
    </location>
</feature>
<feature type="modified residue" description="Phosphoserine; by CDK1" evidence="2">
    <location>
        <position position="165"/>
    </location>
</feature>
<dbReference type="EMBL" id="BC102656">
    <property type="protein sequence ID" value="AAI02657.1"/>
    <property type="molecule type" value="mRNA"/>
</dbReference>
<dbReference type="EMBL" id="BC111142">
    <property type="protein sequence ID" value="AAI11143.1"/>
    <property type="molecule type" value="mRNA"/>
</dbReference>
<dbReference type="RefSeq" id="NP_001029482.1">
    <property type="nucleotide sequence ID" value="NM_001034310.2"/>
</dbReference>
<dbReference type="RefSeq" id="XP_003582518.1">
    <property type="nucleotide sequence ID" value="XM_003582470.4"/>
</dbReference>
<dbReference type="RefSeq" id="XP_003582519.1">
    <property type="nucleotide sequence ID" value="XM_003582471.3"/>
</dbReference>
<dbReference type="RefSeq" id="XP_003582520.1">
    <property type="nucleotide sequence ID" value="XM_003582472.2"/>
</dbReference>
<dbReference type="RefSeq" id="XP_003586385.1">
    <property type="nucleotide sequence ID" value="XM_003586337.4"/>
</dbReference>
<dbReference type="RefSeq" id="XP_003586386.1">
    <property type="nucleotide sequence ID" value="XM_003586338.3"/>
</dbReference>
<dbReference type="RefSeq" id="XP_003586387.1">
    <property type="nucleotide sequence ID" value="XM_003586339.2"/>
</dbReference>
<dbReference type="RefSeq" id="XP_010796369.1">
    <property type="nucleotide sequence ID" value="XM_010798067.1"/>
</dbReference>
<dbReference type="RefSeq" id="XP_010805873.1">
    <property type="nucleotide sequence ID" value="XM_010807571.1"/>
</dbReference>
<dbReference type="FunCoup" id="Q3SZY3">
    <property type="interactions" value="554"/>
</dbReference>
<dbReference type="STRING" id="9913.ENSBTAP00000016162"/>
<dbReference type="PaxDb" id="9913-ENSBTAP00000016162"/>
<dbReference type="GeneID" id="508043"/>
<dbReference type="KEGG" id="bta:508043"/>
<dbReference type="CTD" id="9232"/>
<dbReference type="eggNOG" id="ENOG502S2GG">
    <property type="taxonomic scope" value="Eukaryota"/>
</dbReference>
<dbReference type="HOGENOM" id="CLU_1363209_0_0_1"/>
<dbReference type="InParanoid" id="Q3SZY3"/>
<dbReference type="OrthoDB" id="9905975at2759"/>
<dbReference type="TreeFam" id="TF330797"/>
<dbReference type="Proteomes" id="UP000009136">
    <property type="component" value="Unplaced"/>
</dbReference>
<dbReference type="GO" id="GO:0005737">
    <property type="term" value="C:cytoplasm"/>
    <property type="evidence" value="ECO:0007669"/>
    <property type="project" value="UniProtKB-SubCell"/>
</dbReference>
<dbReference type="GO" id="GO:0005634">
    <property type="term" value="C:nucleus"/>
    <property type="evidence" value="ECO:0000318"/>
    <property type="project" value="GO_Central"/>
</dbReference>
<dbReference type="GO" id="GO:0017124">
    <property type="term" value="F:SH3 domain binding"/>
    <property type="evidence" value="ECO:0007669"/>
    <property type="project" value="UniProtKB-KW"/>
</dbReference>
<dbReference type="GO" id="GO:0051301">
    <property type="term" value="P:cell division"/>
    <property type="evidence" value="ECO:0007669"/>
    <property type="project" value="UniProtKB-KW"/>
</dbReference>
<dbReference type="GO" id="GO:0051276">
    <property type="term" value="P:chromosome organization"/>
    <property type="evidence" value="ECO:0007669"/>
    <property type="project" value="InterPro"/>
</dbReference>
<dbReference type="GO" id="GO:0006281">
    <property type="term" value="P:DNA repair"/>
    <property type="evidence" value="ECO:0007669"/>
    <property type="project" value="UniProtKB-KW"/>
</dbReference>
<dbReference type="GO" id="GO:0045143">
    <property type="term" value="P:homologous chromosome segregation"/>
    <property type="evidence" value="ECO:0000318"/>
    <property type="project" value="GO_Central"/>
</dbReference>
<dbReference type="InterPro" id="IPR006940">
    <property type="entry name" value="Securin_separation_inhibitor"/>
</dbReference>
<dbReference type="PANTHER" id="PTHR10418:SF2">
    <property type="entry name" value="SECURIN"/>
    <property type="match status" value="1"/>
</dbReference>
<dbReference type="PANTHER" id="PTHR10418">
    <property type="entry name" value="SECURIN-3"/>
    <property type="match status" value="1"/>
</dbReference>
<dbReference type="Pfam" id="PF04856">
    <property type="entry name" value="Securin"/>
    <property type="match status" value="1"/>
</dbReference>
<keyword id="KW-0131">Cell cycle</keyword>
<keyword id="KW-0132">Cell division</keyword>
<keyword id="KW-0159">Chromosome partition</keyword>
<keyword id="KW-0963">Cytoplasm</keyword>
<keyword id="KW-0227">DNA damage</keyword>
<keyword id="KW-0234">DNA repair</keyword>
<keyword id="KW-0498">Mitosis</keyword>
<keyword id="KW-0539">Nucleus</keyword>
<keyword id="KW-0597">Phosphoprotein</keyword>
<keyword id="KW-0656">Proto-oncogene</keyword>
<keyword id="KW-1185">Reference proteome</keyword>
<keyword id="KW-0677">Repeat</keyword>
<keyword id="KW-0729">SH3-binding</keyword>
<keyword id="KW-0832">Ubl conjugation</keyword>
<evidence type="ECO:0000250" key="1"/>
<evidence type="ECO:0000250" key="2">
    <source>
        <dbReference type="UniProtKB" id="O95997"/>
    </source>
</evidence>
<evidence type="ECO:0000256" key="3">
    <source>
        <dbReference type="SAM" id="MobiDB-lite"/>
    </source>
</evidence>
<evidence type="ECO:0000305" key="4"/>
<organism>
    <name type="scientific">Bos taurus</name>
    <name type="common">Bovine</name>
    <dbReference type="NCBI Taxonomy" id="9913"/>
    <lineage>
        <taxon>Eukaryota</taxon>
        <taxon>Metazoa</taxon>
        <taxon>Chordata</taxon>
        <taxon>Craniata</taxon>
        <taxon>Vertebrata</taxon>
        <taxon>Euteleostomi</taxon>
        <taxon>Mammalia</taxon>
        <taxon>Eutheria</taxon>
        <taxon>Laurasiatheria</taxon>
        <taxon>Artiodactyla</taxon>
        <taxon>Ruminantia</taxon>
        <taxon>Pecora</taxon>
        <taxon>Bovidae</taxon>
        <taxon>Bovinae</taxon>
        <taxon>Bos</taxon>
    </lineage>
</organism>